<dbReference type="EMBL" id="M20238">
    <property type="protein sequence ID" value="AAA98291.1"/>
    <property type="molecule type" value="Genomic_DNA"/>
</dbReference>
<dbReference type="PIR" id="JT0363">
    <property type="entry name" value="C30754"/>
</dbReference>
<dbReference type="GO" id="GO:0005886">
    <property type="term" value="C:plasma membrane"/>
    <property type="evidence" value="ECO:0007669"/>
    <property type="project" value="UniProtKB-SubCell"/>
</dbReference>
<dbReference type="GO" id="GO:0046690">
    <property type="term" value="P:response to tellurium ion"/>
    <property type="evidence" value="ECO:0007669"/>
    <property type="project" value="UniProtKB-KW"/>
</dbReference>
<dbReference type="InterPro" id="IPR005496">
    <property type="entry name" value="Integral_membrane_TerC"/>
</dbReference>
<dbReference type="InterPro" id="IPR022369">
    <property type="entry name" value="Integral_membrane_TerC_rswitch"/>
</dbReference>
<dbReference type="NCBIfam" id="TIGR03718">
    <property type="entry name" value="R_switched_Alx"/>
    <property type="match status" value="1"/>
</dbReference>
<dbReference type="PANTHER" id="PTHR30238">
    <property type="entry name" value="MEMBRANE BOUND PREDICTED REDOX MODULATOR"/>
    <property type="match status" value="1"/>
</dbReference>
<dbReference type="PANTHER" id="PTHR30238:SF0">
    <property type="entry name" value="THYLAKOID MEMBRANE PROTEIN TERC, CHLOROPLASTIC"/>
    <property type="match status" value="1"/>
</dbReference>
<dbReference type="Pfam" id="PF03741">
    <property type="entry name" value="TerC"/>
    <property type="match status" value="1"/>
</dbReference>
<geneLocation type="plasmid">
    <name>IncHI2 pMER610</name>
</geneLocation>
<proteinExistence type="inferred from homology"/>
<accession>P18780</accession>
<comment type="function">
    <text>Could conceivably alter the intracellular level of tellurium in a manner leading to resistance. Alternatively its presence in the membrane may provide a barrier to entry of the tellurium ions.</text>
</comment>
<comment type="subcellular location">
    <subcellularLocation>
        <location>Cell membrane</location>
        <topology>Multi-pass membrane protein</topology>
    </subcellularLocation>
</comment>
<comment type="similarity">
    <text evidence="2">Belongs to the TerC family.</text>
</comment>
<keyword id="KW-1003">Cell membrane</keyword>
<keyword id="KW-0472">Membrane</keyword>
<keyword id="KW-0614">Plasmid</keyword>
<keyword id="KW-0778">Tellurium resistance</keyword>
<keyword id="KW-0812">Transmembrane</keyword>
<keyword id="KW-1133">Transmembrane helix</keyword>
<protein>
    <recommendedName>
        <fullName>Tellurium resistance protein TerC</fullName>
    </recommendedName>
</protein>
<name>TERC_ALCSP</name>
<feature type="chain" id="PRO_0000103408" description="Tellurium resistance protein TerC">
    <location>
        <begin position="1"/>
        <end position="346"/>
    </location>
</feature>
<feature type="transmembrane region" description="Helical" evidence="1">
    <location>
        <begin position="6"/>
        <end position="26"/>
    </location>
</feature>
<feature type="transmembrane region" description="Helical" evidence="1">
    <location>
        <begin position="42"/>
        <end position="62"/>
    </location>
</feature>
<feature type="transmembrane region" description="Helical" evidence="1">
    <location>
        <begin position="81"/>
        <end position="101"/>
    </location>
</feature>
<feature type="transmembrane region" description="Helical" evidence="1">
    <location>
        <begin position="110"/>
        <end position="130"/>
    </location>
</feature>
<feature type="transmembrane region" description="Helical" evidence="1">
    <location>
        <begin position="132"/>
        <end position="152"/>
    </location>
</feature>
<feature type="transmembrane region" description="Helical" evidence="1">
    <location>
        <begin position="227"/>
        <end position="247"/>
    </location>
</feature>
<feature type="transmembrane region" description="Helical" evidence="1">
    <location>
        <begin position="252"/>
        <end position="272"/>
    </location>
</feature>
<feature type="transmembrane region" description="Helical" evidence="1">
    <location>
        <begin position="286"/>
        <end position="306"/>
    </location>
</feature>
<feature type="transmembrane region" description="Helical" evidence="1">
    <location>
        <begin position="316"/>
        <end position="336"/>
    </location>
</feature>
<evidence type="ECO:0000255" key="1"/>
<evidence type="ECO:0000305" key="2"/>
<organism>
    <name type="scientific">Alcaligenes sp</name>
    <dbReference type="NCBI Taxonomy" id="512"/>
    <lineage>
        <taxon>Bacteria</taxon>
        <taxon>Pseudomonadati</taxon>
        <taxon>Pseudomonadota</taxon>
        <taxon>Betaproteobacteria</taxon>
        <taxon>Burkholderiales</taxon>
        <taxon>Alcaligenaceae</taxon>
        <taxon>Alcaligenes</taxon>
    </lineage>
</organism>
<sequence length="346" mass="38230">MVSTHIGGPAETVTVFVALSVGAIFIDLFMHRHDKPISLKSAALWSVFWVVVAMAFAGFLYVHHGAEVASLFVTGYALEKVLSVDNLFVMMAIFSWFSVPDRYRHRGLYWGIIGAIVFRGIFVAIGTGLLSLGPYVELIFAVVVAWTAVMMLKGGGDDDEIEDYSQHLAYRLVKRFFPIWPKLSGHAFLLTQKEVDAELAKPENKDVSVGRLKKAALYATPLMLCVAVVELSDVMFAFDSVPAIIAVSREPLIVYSAMMFAILGLRTLYFVLEALKQYLSQLEKAVIVLLFFIAFKLGLNATDHIWHHGYSLSATTSLYVVLGVLALGILASVIFPEKPEAENKES</sequence>
<reference key="1">
    <citation type="journal article" date="1988" name="Gene">
        <title>The nucleotide sequence of a plasmid determinant for resistance to tellurium anions.</title>
        <authorList>
            <person name="Jobling M.G."/>
            <person name="Ritchie D.A."/>
        </authorList>
    </citation>
    <scope>NUCLEOTIDE SEQUENCE [GENOMIC DNA]</scope>
</reference>
<gene>
    <name type="primary">terC</name>
</gene>